<protein>
    <recommendedName>
        <fullName>Ras-related protein RabG2</fullName>
    </recommendedName>
</protein>
<comment type="subcellular location">
    <subcellularLocation>
        <location evidence="3">Cell membrane</location>
        <topology evidence="3">Lipid-anchor</topology>
        <orientation evidence="3">Cytoplasmic side</orientation>
    </subcellularLocation>
</comment>
<comment type="similarity">
    <text evidence="3">Belongs to the small GTPase superfamily. Rab family.</text>
</comment>
<comment type="sequence caution" evidence="3">
    <conflict type="erroneous gene model prediction">
        <sequence resource="EMBL-CDS" id="EAL62025"/>
    </conflict>
</comment>
<gene>
    <name type="primary">rabG2</name>
    <name type="ORF">DDB_G0290783</name>
</gene>
<reference key="1">
    <citation type="journal article" date="2005" name="Nature">
        <title>The genome of the social amoeba Dictyostelium discoideum.</title>
        <authorList>
            <person name="Eichinger L."/>
            <person name="Pachebat J.A."/>
            <person name="Gloeckner G."/>
            <person name="Rajandream M.A."/>
            <person name="Sucgang R."/>
            <person name="Berriman M."/>
            <person name="Song J."/>
            <person name="Olsen R."/>
            <person name="Szafranski K."/>
            <person name="Xu Q."/>
            <person name="Tunggal B."/>
            <person name="Kummerfeld S."/>
            <person name="Madera M."/>
            <person name="Konfortov B.A."/>
            <person name="Rivero F."/>
            <person name="Bankier A.T."/>
            <person name="Lehmann R."/>
            <person name="Hamlin N."/>
            <person name="Davies R."/>
            <person name="Gaudet P."/>
            <person name="Fey P."/>
            <person name="Pilcher K."/>
            <person name="Chen G."/>
            <person name="Saunders D."/>
            <person name="Sodergren E.J."/>
            <person name="Davis P."/>
            <person name="Kerhornou A."/>
            <person name="Nie X."/>
            <person name="Hall N."/>
            <person name="Anjard C."/>
            <person name="Hemphill L."/>
            <person name="Bason N."/>
            <person name="Farbrother P."/>
            <person name="Desany B."/>
            <person name="Just E."/>
            <person name="Morio T."/>
            <person name="Rost R."/>
            <person name="Churcher C.M."/>
            <person name="Cooper J."/>
            <person name="Haydock S."/>
            <person name="van Driessche N."/>
            <person name="Cronin A."/>
            <person name="Goodhead I."/>
            <person name="Muzny D.M."/>
            <person name="Mourier T."/>
            <person name="Pain A."/>
            <person name="Lu M."/>
            <person name="Harper D."/>
            <person name="Lindsay R."/>
            <person name="Hauser H."/>
            <person name="James K.D."/>
            <person name="Quiles M."/>
            <person name="Madan Babu M."/>
            <person name="Saito T."/>
            <person name="Buchrieser C."/>
            <person name="Wardroper A."/>
            <person name="Felder M."/>
            <person name="Thangavelu M."/>
            <person name="Johnson D."/>
            <person name="Knights A."/>
            <person name="Loulseged H."/>
            <person name="Mungall K.L."/>
            <person name="Oliver K."/>
            <person name="Price C."/>
            <person name="Quail M.A."/>
            <person name="Urushihara H."/>
            <person name="Hernandez J."/>
            <person name="Rabbinowitsch E."/>
            <person name="Steffen D."/>
            <person name="Sanders M."/>
            <person name="Ma J."/>
            <person name="Kohara Y."/>
            <person name="Sharp S."/>
            <person name="Simmonds M.N."/>
            <person name="Spiegler S."/>
            <person name="Tivey A."/>
            <person name="Sugano S."/>
            <person name="White B."/>
            <person name="Walker D."/>
            <person name="Woodward J.R."/>
            <person name="Winckler T."/>
            <person name="Tanaka Y."/>
            <person name="Shaulsky G."/>
            <person name="Schleicher M."/>
            <person name="Weinstock G.M."/>
            <person name="Rosenthal A."/>
            <person name="Cox E.C."/>
            <person name="Chisholm R.L."/>
            <person name="Gibbs R.A."/>
            <person name="Loomis W.F."/>
            <person name="Platzer M."/>
            <person name="Kay R.R."/>
            <person name="Williams J.G."/>
            <person name="Dear P.H."/>
            <person name="Noegel A.A."/>
            <person name="Barrell B.G."/>
            <person name="Kuspa A."/>
        </authorList>
    </citation>
    <scope>NUCLEOTIDE SEQUENCE [LARGE SCALE GENOMIC DNA]</scope>
    <source>
        <strain>AX4</strain>
    </source>
</reference>
<name>RABG2_DICDI</name>
<evidence type="ECO:0000250" key="1"/>
<evidence type="ECO:0000256" key="2">
    <source>
        <dbReference type="SAM" id="MobiDB-lite"/>
    </source>
</evidence>
<evidence type="ECO:0000305" key="3"/>
<feature type="chain" id="PRO_0000332754" description="Ras-related protein RabG2">
    <location>
        <begin position="1"/>
        <end position="197"/>
    </location>
</feature>
<feature type="region of interest" description="Disordered" evidence="2">
    <location>
        <begin position="175"/>
        <end position="197"/>
    </location>
</feature>
<feature type="binding site" evidence="1">
    <location>
        <begin position="13"/>
        <end position="20"/>
    </location>
    <ligand>
        <name>GTP</name>
        <dbReference type="ChEBI" id="CHEBI:37565"/>
    </ligand>
</feature>
<feature type="binding site" evidence="1">
    <location>
        <begin position="61"/>
        <end position="65"/>
    </location>
    <ligand>
        <name>GTP</name>
        <dbReference type="ChEBI" id="CHEBI:37565"/>
    </ligand>
</feature>
<feature type="binding site" evidence="1">
    <location>
        <begin position="119"/>
        <end position="122"/>
    </location>
    <ligand>
        <name>GTP</name>
        <dbReference type="ChEBI" id="CHEBI:37565"/>
    </ligand>
</feature>
<feature type="lipid moiety-binding region" description="S-geranylgeranyl cysteine" evidence="1">
    <location>
        <position position="197"/>
    </location>
</feature>
<keyword id="KW-1003">Cell membrane</keyword>
<keyword id="KW-0342">GTP-binding</keyword>
<keyword id="KW-0449">Lipoprotein</keyword>
<keyword id="KW-0472">Membrane</keyword>
<keyword id="KW-0547">Nucleotide-binding</keyword>
<keyword id="KW-0636">Prenylation</keyword>
<keyword id="KW-1185">Reference proteome</keyword>
<proteinExistence type="inferred from homology"/>
<dbReference type="EMBL" id="AAFI02000171">
    <property type="protein sequence ID" value="EAL62025.1"/>
    <property type="status" value="ALT_SEQ"/>
    <property type="molecule type" value="Genomic_DNA"/>
</dbReference>
<dbReference type="RefSeq" id="XP_635528.1">
    <property type="nucleotide sequence ID" value="XM_630436.1"/>
</dbReference>
<dbReference type="SMR" id="Q54FL2"/>
<dbReference type="FunCoup" id="Q54FL2">
    <property type="interactions" value="2"/>
</dbReference>
<dbReference type="STRING" id="44689.Q54FL2"/>
<dbReference type="PaxDb" id="44689-DDB0229413"/>
<dbReference type="EnsemblProtists" id="EAL62025">
    <property type="protein sequence ID" value="EAL62025"/>
    <property type="gene ID" value="DDB_G0290783"/>
</dbReference>
<dbReference type="GeneID" id="8627825"/>
<dbReference type="KEGG" id="ddi:DDB_G0290783"/>
<dbReference type="dictyBase" id="DDB_G0290783">
    <property type="gene designation" value="rabG2"/>
</dbReference>
<dbReference type="VEuPathDB" id="AmoebaDB:DDB_G0291738"/>
<dbReference type="eggNOG" id="KOG0084">
    <property type="taxonomic scope" value="Eukaryota"/>
</dbReference>
<dbReference type="InParanoid" id="Q54FL2"/>
<dbReference type="PhylomeDB" id="Q54FL2"/>
<dbReference type="Reactome" id="R-DDI-8854214">
    <property type="pathway name" value="TBC/RABGAPs"/>
</dbReference>
<dbReference type="Reactome" id="R-DDI-8873719">
    <property type="pathway name" value="RAB geranylgeranylation"/>
</dbReference>
<dbReference type="Reactome" id="R-DDI-8876198">
    <property type="pathway name" value="RAB GEFs exchange GTP for GDP on RABs"/>
</dbReference>
<dbReference type="PRO" id="PR:Q54FL2"/>
<dbReference type="Proteomes" id="UP000002195">
    <property type="component" value="Chromosome 5"/>
</dbReference>
<dbReference type="GO" id="GO:0005811">
    <property type="term" value="C:lipid droplet"/>
    <property type="evidence" value="ECO:0007005"/>
    <property type="project" value="dictyBase"/>
</dbReference>
<dbReference type="GO" id="GO:0005886">
    <property type="term" value="C:plasma membrane"/>
    <property type="evidence" value="ECO:0007669"/>
    <property type="project" value="UniProtKB-SubCell"/>
</dbReference>
<dbReference type="GO" id="GO:0005525">
    <property type="term" value="F:GTP binding"/>
    <property type="evidence" value="ECO:0000318"/>
    <property type="project" value="GO_Central"/>
</dbReference>
<dbReference type="GO" id="GO:0003924">
    <property type="term" value="F:GTPase activity"/>
    <property type="evidence" value="ECO:0000318"/>
    <property type="project" value="GO_Central"/>
</dbReference>
<dbReference type="GO" id="GO:0006971">
    <property type="term" value="P:hypotonic response"/>
    <property type="evidence" value="ECO:0007007"/>
    <property type="project" value="dictyBase"/>
</dbReference>
<dbReference type="GO" id="GO:0016192">
    <property type="term" value="P:vesicle-mediated transport"/>
    <property type="evidence" value="ECO:0000318"/>
    <property type="project" value="GO_Central"/>
</dbReference>
<dbReference type="FunFam" id="3.40.50.300:FF:001447">
    <property type="entry name" value="Ras-related protein Rab-1B"/>
    <property type="match status" value="1"/>
</dbReference>
<dbReference type="Gene3D" id="3.40.50.300">
    <property type="entry name" value="P-loop containing nucleotide triphosphate hydrolases"/>
    <property type="match status" value="1"/>
</dbReference>
<dbReference type="InterPro" id="IPR027417">
    <property type="entry name" value="P-loop_NTPase"/>
</dbReference>
<dbReference type="InterPro" id="IPR050227">
    <property type="entry name" value="Rab"/>
</dbReference>
<dbReference type="InterPro" id="IPR005225">
    <property type="entry name" value="Small_GTP-bd"/>
</dbReference>
<dbReference type="InterPro" id="IPR001806">
    <property type="entry name" value="Small_GTPase"/>
</dbReference>
<dbReference type="NCBIfam" id="TIGR00231">
    <property type="entry name" value="small_GTP"/>
    <property type="match status" value="1"/>
</dbReference>
<dbReference type="PANTHER" id="PTHR47977">
    <property type="entry name" value="RAS-RELATED PROTEIN RAB"/>
    <property type="match status" value="1"/>
</dbReference>
<dbReference type="Pfam" id="PF00071">
    <property type="entry name" value="Ras"/>
    <property type="match status" value="1"/>
</dbReference>
<dbReference type="PRINTS" id="PR00449">
    <property type="entry name" value="RASTRNSFRMNG"/>
</dbReference>
<dbReference type="SMART" id="SM00175">
    <property type="entry name" value="RAB"/>
    <property type="match status" value="1"/>
</dbReference>
<dbReference type="SMART" id="SM00176">
    <property type="entry name" value="RAN"/>
    <property type="match status" value="1"/>
</dbReference>
<dbReference type="SMART" id="SM00173">
    <property type="entry name" value="RAS"/>
    <property type="match status" value="1"/>
</dbReference>
<dbReference type="SMART" id="SM00174">
    <property type="entry name" value="RHO"/>
    <property type="match status" value="1"/>
</dbReference>
<dbReference type="SUPFAM" id="SSF52540">
    <property type="entry name" value="P-loop containing nucleoside triphosphate hydrolases"/>
    <property type="match status" value="1"/>
</dbReference>
<dbReference type="PROSITE" id="PS51419">
    <property type="entry name" value="RAB"/>
    <property type="match status" value="1"/>
</dbReference>
<accession>Q54FL2</accession>
<sequence length="197" mass="21759">MSDPDVFKILLIGDSAVGKTSLLLRFADNSFQETSVNMTSVDYKNKNIVIDGRTFNLQIWDTAGQERFRTITSSFYRGAHGVLVCYDVTDQLTYNNVRLWMQEIQRYAVLGVSRVLVGNKCDLEDRKLVNTSIAREYADSLGIPFMEASAATGVNVEEAFMAMANEIYRNHMGGSKPSVVNPGSGGTSNTGGKKKFC</sequence>
<organism>
    <name type="scientific">Dictyostelium discoideum</name>
    <name type="common">Social amoeba</name>
    <dbReference type="NCBI Taxonomy" id="44689"/>
    <lineage>
        <taxon>Eukaryota</taxon>
        <taxon>Amoebozoa</taxon>
        <taxon>Evosea</taxon>
        <taxon>Eumycetozoa</taxon>
        <taxon>Dictyostelia</taxon>
        <taxon>Dictyosteliales</taxon>
        <taxon>Dictyosteliaceae</taxon>
        <taxon>Dictyostelium</taxon>
    </lineage>
</organism>